<evidence type="ECO:0000255" key="1">
    <source>
        <dbReference type="HAMAP-Rule" id="MF_00189"/>
    </source>
</evidence>
<sequence length="199" mass="22440">MKQFIDFIPLILFFIVYKLEPRIVELAGHSFTFGGIFSATAVLILASLLVYGTLFLIQRRLEKGQWITLLACLVFGGMTLTFQSETFLKWKAPVVNWLFALGFAASHFIGDRPLIQRILGHAVSLPAPLWTRLNLAWVAFFVFSGCANLFVAFTFHEFWVDFKVFGSLGMTVLFLVGQGVFLARHMHEHSTESAAKSKD</sequence>
<accession>C1DRP0</accession>
<reference key="1">
    <citation type="journal article" date="2009" name="J. Bacteriol.">
        <title>Genome sequence of Azotobacter vinelandii, an obligate aerobe specialized to support diverse anaerobic metabolic processes.</title>
        <authorList>
            <person name="Setubal J.C."/>
            <person name="Dos Santos P."/>
            <person name="Goldman B.S."/>
            <person name="Ertesvaag H."/>
            <person name="Espin G."/>
            <person name="Rubio L.M."/>
            <person name="Valla S."/>
            <person name="Almeida N.F."/>
            <person name="Balasubramanian D."/>
            <person name="Cromes L."/>
            <person name="Curatti L."/>
            <person name="Du Z."/>
            <person name="Godsy E."/>
            <person name="Goodner B."/>
            <person name="Hellner-Burris K."/>
            <person name="Hernandez J.A."/>
            <person name="Houmiel K."/>
            <person name="Imperial J."/>
            <person name="Kennedy C."/>
            <person name="Larson T.J."/>
            <person name="Latreille P."/>
            <person name="Ligon L.S."/>
            <person name="Lu J."/>
            <person name="Maerk M."/>
            <person name="Miller N.M."/>
            <person name="Norton S."/>
            <person name="O'Carroll I.P."/>
            <person name="Paulsen I."/>
            <person name="Raulfs E.C."/>
            <person name="Roemer R."/>
            <person name="Rosser J."/>
            <person name="Segura D."/>
            <person name="Slater S."/>
            <person name="Stricklin S.L."/>
            <person name="Studholme D.J."/>
            <person name="Sun J."/>
            <person name="Viana C.J."/>
            <person name="Wallin E."/>
            <person name="Wang B."/>
            <person name="Wheeler C."/>
            <person name="Zhu H."/>
            <person name="Dean D.R."/>
            <person name="Dixon R."/>
            <person name="Wood D."/>
        </authorList>
    </citation>
    <scope>NUCLEOTIDE SEQUENCE [LARGE SCALE GENOMIC DNA]</scope>
    <source>
        <strain>DJ / ATCC BAA-1303</strain>
    </source>
</reference>
<organism>
    <name type="scientific">Azotobacter vinelandii (strain DJ / ATCC BAA-1303)</name>
    <dbReference type="NCBI Taxonomy" id="322710"/>
    <lineage>
        <taxon>Bacteria</taxon>
        <taxon>Pseudomonadati</taxon>
        <taxon>Pseudomonadota</taxon>
        <taxon>Gammaproteobacteria</taxon>
        <taxon>Pseudomonadales</taxon>
        <taxon>Pseudomonadaceae</taxon>
        <taxon>Azotobacter</taxon>
    </lineage>
</organism>
<name>YCIB_AZOVD</name>
<keyword id="KW-0997">Cell inner membrane</keyword>
<keyword id="KW-1003">Cell membrane</keyword>
<keyword id="KW-0472">Membrane</keyword>
<keyword id="KW-0812">Transmembrane</keyword>
<keyword id="KW-1133">Transmembrane helix</keyword>
<proteinExistence type="inferred from homology"/>
<protein>
    <recommendedName>
        <fullName evidence="1">Inner membrane-spanning protein YciB</fullName>
    </recommendedName>
</protein>
<comment type="function">
    <text evidence="1">Plays a role in cell envelope biogenesis, maintenance of cell envelope integrity and membrane homeostasis.</text>
</comment>
<comment type="subcellular location">
    <subcellularLocation>
        <location evidence="1">Cell inner membrane</location>
        <topology evidence="1">Multi-pass membrane protein</topology>
    </subcellularLocation>
</comment>
<comment type="similarity">
    <text evidence="1">Belongs to the YciB family.</text>
</comment>
<dbReference type="EMBL" id="CP001157">
    <property type="protein sequence ID" value="ACO77778.1"/>
    <property type="molecule type" value="Genomic_DNA"/>
</dbReference>
<dbReference type="RefSeq" id="WP_012700194.1">
    <property type="nucleotide sequence ID" value="NC_012560.1"/>
</dbReference>
<dbReference type="STRING" id="322710.Avin_15630"/>
<dbReference type="EnsemblBacteria" id="ACO77778">
    <property type="protein sequence ID" value="ACO77778"/>
    <property type="gene ID" value="Avin_15630"/>
</dbReference>
<dbReference type="GeneID" id="88184854"/>
<dbReference type="KEGG" id="avn:Avin_15630"/>
<dbReference type="eggNOG" id="COG2917">
    <property type="taxonomic scope" value="Bacteria"/>
</dbReference>
<dbReference type="HOGENOM" id="CLU_089554_2_0_6"/>
<dbReference type="OrthoDB" id="9788219at2"/>
<dbReference type="Proteomes" id="UP000002424">
    <property type="component" value="Chromosome"/>
</dbReference>
<dbReference type="GO" id="GO:0005886">
    <property type="term" value="C:plasma membrane"/>
    <property type="evidence" value="ECO:0007669"/>
    <property type="project" value="UniProtKB-SubCell"/>
</dbReference>
<dbReference type="HAMAP" id="MF_00189">
    <property type="entry name" value="YciB"/>
    <property type="match status" value="1"/>
</dbReference>
<dbReference type="InterPro" id="IPR006008">
    <property type="entry name" value="YciB"/>
</dbReference>
<dbReference type="NCBIfam" id="TIGR00997">
    <property type="entry name" value="ispZ"/>
    <property type="match status" value="1"/>
</dbReference>
<dbReference type="NCBIfam" id="NF001325">
    <property type="entry name" value="PRK00259.1-3"/>
    <property type="match status" value="1"/>
</dbReference>
<dbReference type="NCBIfam" id="NF001327">
    <property type="entry name" value="PRK00259.1-5"/>
    <property type="match status" value="1"/>
</dbReference>
<dbReference type="PANTHER" id="PTHR36917:SF1">
    <property type="entry name" value="INNER MEMBRANE-SPANNING PROTEIN YCIB"/>
    <property type="match status" value="1"/>
</dbReference>
<dbReference type="PANTHER" id="PTHR36917">
    <property type="entry name" value="INTRACELLULAR SEPTATION PROTEIN A-RELATED"/>
    <property type="match status" value="1"/>
</dbReference>
<dbReference type="Pfam" id="PF04279">
    <property type="entry name" value="IspA"/>
    <property type="match status" value="1"/>
</dbReference>
<gene>
    <name evidence="1" type="primary">yciB</name>
    <name type="ordered locus">Avin_15630</name>
</gene>
<feature type="chain" id="PRO_1000203984" description="Inner membrane-spanning protein YciB">
    <location>
        <begin position="1"/>
        <end position="199"/>
    </location>
</feature>
<feature type="transmembrane region" description="Helical" evidence="1">
    <location>
        <begin position="4"/>
        <end position="24"/>
    </location>
</feature>
<feature type="transmembrane region" description="Helical" evidence="1">
    <location>
        <begin position="36"/>
        <end position="56"/>
    </location>
</feature>
<feature type="transmembrane region" description="Helical" evidence="1">
    <location>
        <begin position="64"/>
        <end position="84"/>
    </location>
</feature>
<feature type="transmembrane region" description="Helical" evidence="1">
    <location>
        <begin position="90"/>
        <end position="110"/>
    </location>
</feature>
<feature type="transmembrane region" description="Helical" evidence="1">
    <location>
        <begin position="135"/>
        <end position="155"/>
    </location>
</feature>
<feature type="transmembrane region" description="Helical" evidence="1">
    <location>
        <begin position="162"/>
        <end position="182"/>
    </location>
</feature>